<gene>
    <name evidence="1" type="primary">chlB</name>
</gene>
<sequence>MKLAYWMYAGPAHIGTLRVASSFKNVHAIMHAPLGDDYFNVMRSMLERERDFTPVTASIVDRHVLARGSQEKVIENITRKDKEENPDLIILTPTCTSSILQEDLQNFVNRAGLDSKSDVILADVNHYRVNELQAADRTLEQIIRFYLEKARSQSNEPLRKTEKPSANILGIFTLGFHNQHDCRELKRLLTDLGIVINQILPEGGSVTNINELPKAWFNLIPYREVGLMAANYLKNEYDMPYVAVTPMGLLDTENCIREIVDIVKSSDTSYNFDFETYIDTQTRFISQAAWFSRSIDCQNLTGKKAVVFGDATHAASITKILAREMGIRVSCSGTYCKHDADWFREQVDGFCDEVLITDDHTQVADMIARIEPAAIFGTQMERHIGKRLDIPCGVISAPVHIQNFPLGFRPFLGYEGTNQISDLVYNSFTLGMEDHLLEIFGGHDTKEVITKSLSTDSDLAWAPEALTELQRIPGFVRGKIKRNTEKFAREKNCNLITLEIMFAAKEAVGA</sequence>
<keyword id="KW-0004">4Fe-4S</keyword>
<keyword id="KW-0067">ATP-binding</keyword>
<keyword id="KW-0149">Chlorophyll biosynthesis</keyword>
<keyword id="KW-0150">Chloroplast</keyword>
<keyword id="KW-0408">Iron</keyword>
<keyword id="KW-0411">Iron-sulfur</keyword>
<keyword id="KW-0479">Metal-binding</keyword>
<keyword id="KW-0547">Nucleotide-binding</keyword>
<keyword id="KW-0560">Oxidoreductase</keyword>
<keyword id="KW-0602">Photosynthesis</keyword>
<keyword id="KW-0934">Plastid</keyword>
<accession>Q6VQA8</accession>
<proteinExistence type="inferred from homology"/>
<geneLocation type="chloroplast"/>
<organism>
    <name type="scientific">Auxenochlorella protothecoides</name>
    <name type="common">Green microalga</name>
    <name type="synonym">Chlorella protothecoides</name>
    <dbReference type="NCBI Taxonomy" id="3075"/>
    <lineage>
        <taxon>Eukaryota</taxon>
        <taxon>Viridiplantae</taxon>
        <taxon>Chlorophyta</taxon>
        <taxon>core chlorophytes</taxon>
        <taxon>Trebouxiophyceae</taxon>
        <taxon>Chlorellales</taxon>
        <taxon>Chlorellaceae</taxon>
        <taxon>Auxenochlorella</taxon>
    </lineage>
</organism>
<protein>
    <recommendedName>
        <fullName evidence="1">Light-independent protochlorophyllide reductase subunit B</fullName>
        <shortName evidence="1">DPOR subunit B</shortName>
        <shortName evidence="1">LI-POR subunit B</shortName>
        <ecNumber evidence="1">1.3.7.7</ecNumber>
    </recommendedName>
</protein>
<dbReference type="EC" id="1.3.7.7" evidence="1"/>
<dbReference type="EMBL" id="AY331983">
    <property type="protein sequence ID" value="AAP93907.1"/>
    <property type="molecule type" value="Genomic_DNA"/>
</dbReference>
<dbReference type="SMR" id="Q6VQA8"/>
<dbReference type="BRENDA" id="1.3.7.7">
    <property type="organism ID" value="1329"/>
</dbReference>
<dbReference type="UniPathway" id="UPA00670"/>
<dbReference type="GO" id="GO:0009507">
    <property type="term" value="C:chloroplast"/>
    <property type="evidence" value="ECO:0007669"/>
    <property type="project" value="UniProtKB-SubCell"/>
</dbReference>
<dbReference type="GO" id="GO:0051539">
    <property type="term" value="F:4 iron, 4 sulfur cluster binding"/>
    <property type="evidence" value="ECO:0007669"/>
    <property type="project" value="UniProtKB-UniRule"/>
</dbReference>
<dbReference type="GO" id="GO:0005524">
    <property type="term" value="F:ATP binding"/>
    <property type="evidence" value="ECO:0007669"/>
    <property type="project" value="UniProtKB-UniRule"/>
</dbReference>
<dbReference type="GO" id="GO:0046872">
    <property type="term" value="F:metal ion binding"/>
    <property type="evidence" value="ECO:0007669"/>
    <property type="project" value="UniProtKB-KW"/>
</dbReference>
<dbReference type="GO" id="GO:0016730">
    <property type="term" value="F:oxidoreductase activity, acting on iron-sulfur proteins as donors"/>
    <property type="evidence" value="ECO:0007669"/>
    <property type="project" value="InterPro"/>
</dbReference>
<dbReference type="GO" id="GO:0016636">
    <property type="term" value="F:oxidoreductase activity, acting on the CH-CH group of donors, iron-sulfur protein as acceptor"/>
    <property type="evidence" value="ECO:0007669"/>
    <property type="project" value="UniProtKB-UniRule"/>
</dbReference>
<dbReference type="GO" id="GO:0036068">
    <property type="term" value="P:light-independent chlorophyll biosynthetic process"/>
    <property type="evidence" value="ECO:0007669"/>
    <property type="project" value="UniProtKB-UniRule"/>
</dbReference>
<dbReference type="GO" id="GO:0019685">
    <property type="term" value="P:photosynthesis, dark reaction"/>
    <property type="evidence" value="ECO:0007669"/>
    <property type="project" value="InterPro"/>
</dbReference>
<dbReference type="CDD" id="cd01981">
    <property type="entry name" value="Pchlide_reductase_B"/>
    <property type="match status" value="1"/>
</dbReference>
<dbReference type="Gene3D" id="1.20.89.20">
    <property type="match status" value="1"/>
</dbReference>
<dbReference type="Gene3D" id="3.40.50.1980">
    <property type="entry name" value="Nitrogenase molybdenum iron protein domain"/>
    <property type="match status" value="3"/>
</dbReference>
<dbReference type="Gene3D" id="1.10.8.550">
    <property type="entry name" value="Proto-chlorophyllide reductase 57 kD subunit B"/>
    <property type="match status" value="1"/>
</dbReference>
<dbReference type="HAMAP" id="MF_00353">
    <property type="entry name" value="ChlB_BchB"/>
    <property type="match status" value="1"/>
</dbReference>
<dbReference type="InterPro" id="IPR050152">
    <property type="entry name" value="ChlB/BchB/BchZ"/>
</dbReference>
<dbReference type="InterPro" id="IPR013580">
    <property type="entry name" value="LI-POR_suB-like_C"/>
</dbReference>
<dbReference type="InterPro" id="IPR000510">
    <property type="entry name" value="Nase/OxRdtase_comp1"/>
</dbReference>
<dbReference type="InterPro" id="IPR042298">
    <property type="entry name" value="P-CP_red_C"/>
</dbReference>
<dbReference type="InterPro" id="IPR005969">
    <property type="entry name" value="Protochl_reductB"/>
</dbReference>
<dbReference type="InterPro" id="IPR016209">
    <property type="entry name" value="Protochlorophyllide_Rdtase"/>
</dbReference>
<dbReference type="NCBIfam" id="TIGR01278">
    <property type="entry name" value="DPOR_BchB"/>
    <property type="match status" value="1"/>
</dbReference>
<dbReference type="PANTHER" id="PTHR33712">
    <property type="entry name" value="LIGHT-INDEPENDENT PROTOCHLOROPHYLLIDE REDUCTASE SUBUNIT B"/>
    <property type="match status" value="1"/>
</dbReference>
<dbReference type="PANTHER" id="PTHR33712:SF7">
    <property type="entry name" value="LIGHT-INDEPENDENT PROTOCHLOROPHYLLIDE REDUCTASE SUBUNIT B"/>
    <property type="match status" value="1"/>
</dbReference>
<dbReference type="Pfam" id="PF00148">
    <property type="entry name" value="Oxidored_nitro"/>
    <property type="match status" value="1"/>
</dbReference>
<dbReference type="Pfam" id="PF08369">
    <property type="entry name" value="PCP_red"/>
    <property type="match status" value="1"/>
</dbReference>
<dbReference type="PIRSF" id="PIRSF000163">
    <property type="entry name" value="PCP_ChlB"/>
    <property type="match status" value="1"/>
</dbReference>
<dbReference type="SUPFAM" id="SSF53807">
    <property type="entry name" value="Helical backbone' metal receptor"/>
    <property type="match status" value="1"/>
</dbReference>
<feature type="chain" id="PRO_0000219815" description="Light-independent protochlorophyllide reductase subunit B">
    <location>
        <begin position="1"/>
        <end position="510"/>
    </location>
</feature>
<feature type="active site" description="Proton donor" evidence="1">
    <location>
        <position position="296"/>
    </location>
</feature>
<feature type="binding site" evidence="1">
    <location>
        <position position="36"/>
    </location>
    <ligand>
        <name>[4Fe-4S] cluster</name>
        <dbReference type="ChEBI" id="CHEBI:49883"/>
        <note>ligand shared with heterodimeric partner</note>
    </ligand>
</feature>
<feature type="binding site" evidence="1">
    <location>
        <begin position="431"/>
        <end position="432"/>
    </location>
    <ligand>
        <name>substrate</name>
    </ligand>
</feature>
<comment type="function">
    <text evidence="1">Component of the dark-operative protochlorophyllide reductase (DPOR) that uses Mg-ATP and reduced ferredoxin to reduce ring D of protochlorophyllide (Pchlide) to form chlorophyllide a (Chlide). This reaction is light-independent. The NB-protein (ChlN-ChlB) is the catalytic component of the complex.</text>
</comment>
<comment type="catalytic activity">
    <reaction evidence="1">
        <text>chlorophyllide a + oxidized 2[4Fe-4S]-[ferredoxin] + 2 ADP + 2 phosphate = protochlorophyllide a + reduced 2[4Fe-4S]-[ferredoxin] + 2 ATP + 2 H2O</text>
        <dbReference type="Rhea" id="RHEA:28202"/>
        <dbReference type="Rhea" id="RHEA-COMP:10002"/>
        <dbReference type="Rhea" id="RHEA-COMP:10004"/>
        <dbReference type="ChEBI" id="CHEBI:15377"/>
        <dbReference type="ChEBI" id="CHEBI:30616"/>
        <dbReference type="ChEBI" id="CHEBI:33722"/>
        <dbReference type="ChEBI" id="CHEBI:33723"/>
        <dbReference type="ChEBI" id="CHEBI:43474"/>
        <dbReference type="ChEBI" id="CHEBI:83348"/>
        <dbReference type="ChEBI" id="CHEBI:83350"/>
        <dbReference type="ChEBI" id="CHEBI:456216"/>
        <dbReference type="EC" id="1.3.7.7"/>
    </reaction>
</comment>
<comment type="cofactor">
    <cofactor evidence="1">
        <name>[4Fe-4S] cluster</name>
        <dbReference type="ChEBI" id="CHEBI:49883"/>
    </cofactor>
    <text evidence="1">Binds 1 [4Fe-4S] cluster per heterodimer. The cluster is bound at the heterodimer interface by residues from both subunits.</text>
</comment>
<comment type="pathway">
    <text evidence="1">Porphyrin-containing compound metabolism; chlorophyll biosynthesis (light-independent).</text>
</comment>
<comment type="subunit">
    <text evidence="1">Protochlorophyllide reductase is composed of three subunits; ChlL, ChlN and ChlB. Forms a heterotetramer of two ChlB and two ChlN subunits.</text>
</comment>
<comment type="subcellular location">
    <subcellularLocation>
        <location>Plastid</location>
        <location>Chloroplast</location>
    </subcellularLocation>
</comment>
<comment type="similarity">
    <text evidence="1">Belongs to the ChlB/BchB/BchZ family.</text>
</comment>
<reference key="1">
    <citation type="submission" date="2003-06" db="EMBL/GenBank/DDBJ databases">
        <title>Cloning of LIPOR genes from Chlorella protothecoides CS-41 and their expression in E. coli BL21.</title>
        <authorList>
            <person name="Shi C."/>
            <person name="Shi X."/>
        </authorList>
    </citation>
    <scope>NUCLEOTIDE SEQUENCE [GENOMIC DNA]</scope>
    <source>
        <strain>CS-41</strain>
    </source>
</reference>
<name>CHLB_AUXPR</name>
<evidence type="ECO:0000255" key="1">
    <source>
        <dbReference type="HAMAP-Rule" id="MF_00353"/>
    </source>
</evidence>